<proteinExistence type="inferred from homology"/>
<keyword id="KW-0520">NAD</keyword>
<keyword id="KW-0560">Oxidoreductase</keyword>
<feature type="chain" id="PRO_0000056459" description="Putative aldehyde dehydrogenase AldA">
    <location>
        <begin position="1"/>
        <end position="495"/>
    </location>
</feature>
<feature type="active site" evidence="1">
    <location>
        <position position="256"/>
    </location>
</feature>
<feature type="active site" evidence="1">
    <location>
        <position position="290"/>
    </location>
</feature>
<feature type="binding site" evidence="1">
    <location>
        <begin position="212"/>
        <end position="218"/>
    </location>
    <ligand>
        <name>NAD(+)</name>
        <dbReference type="ChEBI" id="CHEBI:57540"/>
    </ligand>
</feature>
<comment type="catalytic activity">
    <reaction>
        <text>an aldehyde + NAD(+) + H2O = a carboxylate + NADH + 2 H(+)</text>
        <dbReference type="Rhea" id="RHEA:16185"/>
        <dbReference type="ChEBI" id="CHEBI:15377"/>
        <dbReference type="ChEBI" id="CHEBI:15378"/>
        <dbReference type="ChEBI" id="CHEBI:17478"/>
        <dbReference type="ChEBI" id="CHEBI:29067"/>
        <dbReference type="ChEBI" id="CHEBI:57540"/>
        <dbReference type="ChEBI" id="CHEBI:57945"/>
        <dbReference type="EC" id="1.2.1.3"/>
    </reaction>
</comment>
<comment type="similarity">
    <text evidence="2">Belongs to the aldehyde dehydrogenase family.</text>
</comment>
<name>ALDA_STAAS</name>
<gene>
    <name type="primary">aldA</name>
    <name type="ordered locus">SAS0142</name>
</gene>
<evidence type="ECO:0000250" key="1"/>
<evidence type="ECO:0000305" key="2"/>
<sequence length="495" mass="53646">MAVNVRDYIAENYGLFINGEFVKGSSDETIEVTNPATGETLSHITRAKDKDVDHAVKVAQDAFESWSLTSKSERAQMLRDIGDKLMAQKDKIAMIETLNNGKPIRETTAIDIPFAARHFHYFASVIETEEGTVNDIDKDTMSIVRHEPIGVVGAVVAWNFPMLLAAWKIAPAIAAGNTIVIQPSSSTPLSLLEVAKIFQEVLPKGVVNILTGKGSESGNAIFNHDGVDKLSFTGSTDVGYQVAEAAAKHLVPATLELGGKSANIILDDANLDLAVEGIQLGILFNQGEVCSAGSRLLVHEKIYDQLVPRLQEAFSNIKVGDPQDEATQMGSQTGKDQLDKIQSYIDAAKESDAQILAGGHRLTENGLDKGFFFEPTLIAVPDNHHKLAQEEIFGPVLTVIKVKDDQEAIDIANDSEYGLAGGVFSQNITRALNIAKAVRTGRIWINTYNQVPEGAPFGGYKKSGIGRETYKGALSNYQQVKNIYIDTSNALKGLY</sequence>
<reference key="1">
    <citation type="journal article" date="2004" name="Proc. Natl. Acad. Sci. U.S.A.">
        <title>Complete genomes of two clinical Staphylococcus aureus strains: evidence for the rapid evolution of virulence and drug resistance.</title>
        <authorList>
            <person name="Holden M.T.G."/>
            <person name="Feil E.J."/>
            <person name="Lindsay J.A."/>
            <person name="Peacock S.J."/>
            <person name="Day N.P.J."/>
            <person name="Enright M.C."/>
            <person name="Foster T.J."/>
            <person name="Moore C.E."/>
            <person name="Hurst L."/>
            <person name="Atkin R."/>
            <person name="Barron A."/>
            <person name="Bason N."/>
            <person name="Bentley S.D."/>
            <person name="Chillingworth C."/>
            <person name="Chillingworth T."/>
            <person name="Churcher C."/>
            <person name="Clark L."/>
            <person name="Corton C."/>
            <person name="Cronin A."/>
            <person name="Doggett J."/>
            <person name="Dowd L."/>
            <person name="Feltwell T."/>
            <person name="Hance Z."/>
            <person name="Harris B."/>
            <person name="Hauser H."/>
            <person name="Holroyd S."/>
            <person name="Jagels K."/>
            <person name="James K.D."/>
            <person name="Lennard N."/>
            <person name="Line A."/>
            <person name="Mayes R."/>
            <person name="Moule S."/>
            <person name="Mungall K."/>
            <person name="Ormond D."/>
            <person name="Quail M.A."/>
            <person name="Rabbinowitsch E."/>
            <person name="Rutherford K.M."/>
            <person name="Sanders M."/>
            <person name="Sharp S."/>
            <person name="Simmonds M."/>
            <person name="Stevens K."/>
            <person name="Whitehead S."/>
            <person name="Barrell B.G."/>
            <person name="Spratt B.G."/>
            <person name="Parkhill J."/>
        </authorList>
    </citation>
    <scope>NUCLEOTIDE SEQUENCE [LARGE SCALE GENOMIC DNA]</scope>
    <source>
        <strain>MSSA476</strain>
    </source>
</reference>
<accession>Q6GCV9</accession>
<protein>
    <recommendedName>
        <fullName>Putative aldehyde dehydrogenase AldA</fullName>
        <ecNumber>1.2.1.3</ecNumber>
    </recommendedName>
</protein>
<organism>
    <name type="scientific">Staphylococcus aureus (strain MSSA476)</name>
    <dbReference type="NCBI Taxonomy" id="282459"/>
    <lineage>
        <taxon>Bacteria</taxon>
        <taxon>Bacillati</taxon>
        <taxon>Bacillota</taxon>
        <taxon>Bacilli</taxon>
        <taxon>Bacillales</taxon>
        <taxon>Staphylococcaceae</taxon>
        <taxon>Staphylococcus</taxon>
    </lineage>
</organism>
<dbReference type="EC" id="1.2.1.3"/>
<dbReference type="EMBL" id="BX571857">
    <property type="protein sequence ID" value="CAG41910.1"/>
    <property type="molecule type" value="Genomic_DNA"/>
</dbReference>
<dbReference type="RefSeq" id="WP_000290393.1">
    <property type="nucleotide sequence ID" value="NC_002953.3"/>
</dbReference>
<dbReference type="SMR" id="Q6GCV9"/>
<dbReference type="KEGG" id="sas:SAS0142"/>
<dbReference type="HOGENOM" id="CLU_005391_0_2_9"/>
<dbReference type="GO" id="GO:0004029">
    <property type="term" value="F:aldehyde dehydrogenase (NAD+) activity"/>
    <property type="evidence" value="ECO:0007669"/>
    <property type="project" value="UniProtKB-EC"/>
</dbReference>
<dbReference type="CDD" id="cd07117">
    <property type="entry name" value="ALDH_StaphAldA1"/>
    <property type="match status" value="1"/>
</dbReference>
<dbReference type="FunFam" id="3.40.309.10:FF:000012">
    <property type="entry name" value="Betaine aldehyde dehydrogenase"/>
    <property type="match status" value="1"/>
</dbReference>
<dbReference type="FunFam" id="3.40.605.10:FF:000007">
    <property type="entry name" value="NAD/NADP-dependent betaine aldehyde dehydrogenase"/>
    <property type="match status" value="1"/>
</dbReference>
<dbReference type="Gene3D" id="3.40.605.10">
    <property type="entry name" value="Aldehyde Dehydrogenase, Chain A, domain 1"/>
    <property type="match status" value="1"/>
</dbReference>
<dbReference type="Gene3D" id="3.40.309.10">
    <property type="entry name" value="Aldehyde Dehydrogenase, Chain A, domain 2"/>
    <property type="match status" value="1"/>
</dbReference>
<dbReference type="InterPro" id="IPR016161">
    <property type="entry name" value="Ald_DH/histidinol_DH"/>
</dbReference>
<dbReference type="InterPro" id="IPR016163">
    <property type="entry name" value="Ald_DH_C"/>
</dbReference>
<dbReference type="InterPro" id="IPR016160">
    <property type="entry name" value="Ald_DH_CS_CYS"/>
</dbReference>
<dbReference type="InterPro" id="IPR029510">
    <property type="entry name" value="Ald_DH_CS_GLU"/>
</dbReference>
<dbReference type="InterPro" id="IPR016162">
    <property type="entry name" value="Ald_DH_N"/>
</dbReference>
<dbReference type="InterPro" id="IPR015590">
    <property type="entry name" value="Aldehyde_DH_dom"/>
</dbReference>
<dbReference type="PANTHER" id="PTHR43111">
    <property type="entry name" value="ALDEHYDE DEHYDROGENASE B-RELATED"/>
    <property type="match status" value="1"/>
</dbReference>
<dbReference type="PANTHER" id="PTHR43111:SF1">
    <property type="entry name" value="ALDEHYDE DEHYDROGENASE B-RELATED"/>
    <property type="match status" value="1"/>
</dbReference>
<dbReference type="Pfam" id="PF00171">
    <property type="entry name" value="Aldedh"/>
    <property type="match status" value="1"/>
</dbReference>
<dbReference type="SUPFAM" id="SSF53720">
    <property type="entry name" value="ALDH-like"/>
    <property type="match status" value="1"/>
</dbReference>
<dbReference type="PROSITE" id="PS00070">
    <property type="entry name" value="ALDEHYDE_DEHYDR_CYS"/>
    <property type="match status" value="1"/>
</dbReference>
<dbReference type="PROSITE" id="PS00687">
    <property type="entry name" value="ALDEHYDE_DEHYDR_GLU"/>
    <property type="match status" value="1"/>
</dbReference>